<proteinExistence type="evidence at protein level"/>
<accession>P38557</accession>
<evidence type="ECO:0000255" key="1"/>
<evidence type="ECO:0000269" key="2">
    <source>
    </source>
</evidence>
<evidence type="ECO:0000305" key="3"/>
<evidence type="ECO:0000305" key="4">
    <source>
    </source>
</evidence>
<feature type="chain" id="PRO_0000048445" description="Tubulin gamma-1 chain">
    <location>
        <begin position="1"/>
        <end position="474"/>
    </location>
</feature>
<feature type="binding site" evidence="1">
    <location>
        <begin position="142"/>
        <end position="148"/>
    </location>
    <ligand>
        <name>GTP</name>
        <dbReference type="ChEBI" id="CHEBI:37565"/>
    </ligand>
</feature>
<keyword id="KW-0963">Cytoplasm</keyword>
<keyword id="KW-0206">Cytoskeleton</keyword>
<keyword id="KW-0342">GTP-binding</keyword>
<keyword id="KW-0493">Microtubule</keyword>
<keyword id="KW-0547">Nucleotide-binding</keyword>
<keyword id="KW-0539">Nucleus</keyword>
<keyword id="KW-1185">Reference proteome</keyword>
<name>TBG1_ARATH</name>
<sequence>MPREIITLQVGQCGNQIGMEFWKQLCLEHGISKDGILEDFATQGGDRKDVFFYQADDQHYIPRALLIDLEPRVINGIQNGDYRNLYNHENIFVADHGGGAGNNWASGYHQGKGVEEEIMDMIDREADGSDSLEGFVLCHSIAGGTGSGMGSYLLETLNDRYSKKLVQTYSVFPNQMETSDVVVQPYNSLLTLKRLTLNADCVVVLDNTALGRIAVERLHLTNPTFAQTNSLVSTVMSASTTTLRYPGYMNNDLVGLLASLIPTPRCHFLMTGYTPLTVERQANVIRKTTVLDVMRRLLQTKNIMVSSYARNKEASQAKYISILNIIQGEVDPTQVHESLQRIRERKLVNFIEWGPASIQVALSKKSPYVQTAHRVSGLMLASHTSIRHLFSKCLSQYDKLRKKQAFLDNYRKFPMFADNDLSEFDESRDIIESLVDEYKACESPDYIKWGMEDPEQLMTGEGNASGVVDPKLAF</sequence>
<gene>
    <name type="primary">TUBG1</name>
    <name type="ordered locus">At3g61650</name>
    <name type="ORF">F15G16.40</name>
</gene>
<organism>
    <name type="scientific">Arabidopsis thaliana</name>
    <name type="common">Mouse-ear cress</name>
    <dbReference type="NCBI Taxonomy" id="3702"/>
    <lineage>
        <taxon>Eukaryota</taxon>
        <taxon>Viridiplantae</taxon>
        <taxon>Streptophyta</taxon>
        <taxon>Embryophyta</taxon>
        <taxon>Tracheophyta</taxon>
        <taxon>Spermatophyta</taxon>
        <taxon>Magnoliopsida</taxon>
        <taxon>eudicotyledons</taxon>
        <taxon>Gunneridae</taxon>
        <taxon>Pentapetalae</taxon>
        <taxon>rosids</taxon>
        <taxon>malvids</taxon>
        <taxon>Brassicales</taxon>
        <taxon>Brassicaceae</taxon>
        <taxon>Camelineae</taxon>
        <taxon>Arabidopsis</taxon>
    </lineage>
</organism>
<reference key="1">
    <citation type="journal article" date="1994" name="Plant Cell">
        <title>Gamma-tubulin in Arabidopsis: gene sequence, immunoblot, and immunofluorescence studies.</title>
        <authorList>
            <person name="Liu B."/>
            <person name="Joshi H.C."/>
            <person name="Wilson T.J."/>
            <person name="Silflow C.D."/>
            <person name="Palevitz B.A."/>
            <person name="Snustad D.P."/>
        </authorList>
    </citation>
    <scope>NUCLEOTIDE SEQUENCE [GENOMIC DNA]</scope>
    <source>
        <strain>cv. Columbia</strain>
    </source>
</reference>
<reference key="2">
    <citation type="journal article" date="2000" name="Nature">
        <title>Sequence and analysis of chromosome 3 of the plant Arabidopsis thaliana.</title>
        <authorList>
            <person name="Salanoubat M."/>
            <person name="Lemcke K."/>
            <person name="Rieger M."/>
            <person name="Ansorge W."/>
            <person name="Unseld M."/>
            <person name="Fartmann B."/>
            <person name="Valle G."/>
            <person name="Bloecker H."/>
            <person name="Perez-Alonso M."/>
            <person name="Obermaier B."/>
            <person name="Delseny M."/>
            <person name="Boutry M."/>
            <person name="Grivell L.A."/>
            <person name="Mache R."/>
            <person name="Puigdomenech P."/>
            <person name="De Simone V."/>
            <person name="Choisne N."/>
            <person name="Artiguenave F."/>
            <person name="Robert C."/>
            <person name="Brottier P."/>
            <person name="Wincker P."/>
            <person name="Cattolico L."/>
            <person name="Weissenbach J."/>
            <person name="Saurin W."/>
            <person name="Quetier F."/>
            <person name="Schaefer M."/>
            <person name="Mueller-Auer S."/>
            <person name="Gabel C."/>
            <person name="Fuchs M."/>
            <person name="Benes V."/>
            <person name="Wurmbach E."/>
            <person name="Drzonek H."/>
            <person name="Erfle H."/>
            <person name="Jordan N."/>
            <person name="Bangert S."/>
            <person name="Wiedelmann R."/>
            <person name="Kranz H."/>
            <person name="Voss H."/>
            <person name="Holland R."/>
            <person name="Brandt P."/>
            <person name="Nyakatura G."/>
            <person name="Vezzi A."/>
            <person name="D'Angelo M."/>
            <person name="Pallavicini A."/>
            <person name="Toppo S."/>
            <person name="Simionati B."/>
            <person name="Conrad A."/>
            <person name="Hornischer K."/>
            <person name="Kauer G."/>
            <person name="Loehnert T.-H."/>
            <person name="Nordsiek G."/>
            <person name="Reichelt J."/>
            <person name="Scharfe M."/>
            <person name="Schoen O."/>
            <person name="Bargues M."/>
            <person name="Terol J."/>
            <person name="Climent J."/>
            <person name="Navarro P."/>
            <person name="Collado C."/>
            <person name="Perez-Perez A."/>
            <person name="Ottenwaelder B."/>
            <person name="Duchemin D."/>
            <person name="Cooke R."/>
            <person name="Laudie M."/>
            <person name="Berger-Llauro C."/>
            <person name="Purnelle B."/>
            <person name="Masuy D."/>
            <person name="de Haan M."/>
            <person name="Maarse A.C."/>
            <person name="Alcaraz J.-P."/>
            <person name="Cottet A."/>
            <person name="Casacuberta E."/>
            <person name="Monfort A."/>
            <person name="Argiriou A."/>
            <person name="Flores M."/>
            <person name="Liguori R."/>
            <person name="Vitale D."/>
            <person name="Mannhaupt G."/>
            <person name="Haase D."/>
            <person name="Schoof H."/>
            <person name="Rudd S."/>
            <person name="Zaccaria P."/>
            <person name="Mewes H.-W."/>
            <person name="Mayer K.F.X."/>
            <person name="Kaul S."/>
            <person name="Town C.D."/>
            <person name="Koo H.L."/>
            <person name="Tallon L.J."/>
            <person name="Jenkins J."/>
            <person name="Rooney T."/>
            <person name="Rizzo M."/>
            <person name="Walts A."/>
            <person name="Utterback T."/>
            <person name="Fujii C.Y."/>
            <person name="Shea T.P."/>
            <person name="Creasy T.H."/>
            <person name="Haas B."/>
            <person name="Maiti R."/>
            <person name="Wu D."/>
            <person name="Peterson J."/>
            <person name="Van Aken S."/>
            <person name="Pai G."/>
            <person name="Militscher J."/>
            <person name="Sellers P."/>
            <person name="Gill J.E."/>
            <person name="Feldblyum T.V."/>
            <person name="Preuss D."/>
            <person name="Lin X."/>
            <person name="Nierman W.C."/>
            <person name="Salzberg S.L."/>
            <person name="White O."/>
            <person name="Venter J.C."/>
            <person name="Fraser C.M."/>
            <person name="Kaneko T."/>
            <person name="Nakamura Y."/>
            <person name="Sato S."/>
            <person name="Kato T."/>
            <person name="Asamizu E."/>
            <person name="Sasamoto S."/>
            <person name="Kimura T."/>
            <person name="Idesawa K."/>
            <person name="Kawashima K."/>
            <person name="Kishida Y."/>
            <person name="Kiyokawa C."/>
            <person name="Kohara M."/>
            <person name="Matsumoto M."/>
            <person name="Matsuno A."/>
            <person name="Muraki A."/>
            <person name="Nakayama S."/>
            <person name="Nakazaki N."/>
            <person name="Shinpo S."/>
            <person name="Takeuchi C."/>
            <person name="Wada T."/>
            <person name="Watanabe A."/>
            <person name="Yamada M."/>
            <person name="Yasuda M."/>
            <person name="Tabata S."/>
        </authorList>
    </citation>
    <scope>NUCLEOTIDE SEQUENCE [LARGE SCALE GENOMIC DNA]</scope>
    <source>
        <strain>cv. Columbia</strain>
    </source>
</reference>
<reference key="3">
    <citation type="journal article" date="2017" name="Plant J.">
        <title>Araport11: a complete reannotation of the Arabidopsis thaliana reference genome.</title>
        <authorList>
            <person name="Cheng C.Y."/>
            <person name="Krishnakumar V."/>
            <person name="Chan A.P."/>
            <person name="Thibaud-Nissen F."/>
            <person name="Schobel S."/>
            <person name="Town C.D."/>
        </authorList>
    </citation>
    <scope>GENOME REANNOTATION</scope>
    <source>
        <strain>cv. Columbia</strain>
    </source>
</reference>
<reference key="4">
    <citation type="journal article" date="2011" name="PLoS Pathog.">
        <title>Feeding cells induced by phytoparasitic nematodes require gamma-tubulin ring complex for microtubule reorganization.</title>
        <authorList>
            <person name="Banora M.Y."/>
            <person name="Rodiuc N."/>
            <person name="Baldacci-Cresp F."/>
            <person name="Smertenko A."/>
            <person name="Bleve-Zacheo T."/>
            <person name="Mellilo M.T."/>
            <person name="Karimi M."/>
            <person name="Hilson P."/>
            <person name="Evrard J.L."/>
            <person name="Favery B."/>
            <person name="Engler G."/>
            <person name="Abad P."/>
            <person name="de Almeida Engler J."/>
        </authorList>
    </citation>
    <scope>FUNCTION IN NEMATODE INFECTION</scope>
    <scope>DISRUPTION PHENOTYPE</scope>
    <scope>SUBCELLULAR LOCATION</scope>
    <scope>INDUCTION BY NEMATODES</scope>
    <scope>SUBUNIT</scope>
</reference>
<comment type="function">
    <text evidence="2">Tubulin is the major constituent of microtubules. The gamma chain is found at microtubule organizing centers (MTOC) such as the spindle poles, suggesting that it is involved in the minus-end nucleation of microtubule assembly.</text>
</comment>
<comment type="function">
    <text evidence="2">Gamma-tubulin complex is essential for the control of microtubular network remodeling in the course of initiation and development of giant-feeding cells, and for the successful reproduction of nematodes (e.g. Meloidogyne spp.) in their plant hosts.</text>
</comment>
<comment type="subunit">
    <text evidence="2">Gamma-tubulin complex is composed of gamma-tubulin and GCP proteins.</text>
</comment>
<comment type="subcellular location">
    <subcellularLocation>
        <location evidence="4">Cytoplasm</location>
        <location evidence="4">Cytoskeleton</location>
        <location evidence="4">Microtubule organizing center</location>
    </subcellularLocation>
    <subcellularLocation>
        <location evidence="2">Cytoplasm</location>
    </subcellularLocation>
    <subcellularLocation>
        <location evidence="2">Nucleus</location>
    </subcellularLocation>
    <subcellularLocation>
        <location evidence="2">Cytoplasm</location>
        <location evidence="2">Cell cortex</location>
    </subcellularLocation>
    <text>Present in discrete dots in the cytoplasm and cell cortex.</text>
</comment>
<comment type="induction">
    <text evidence="2">Up-regulated in galls upon nematode infection.</text>
</comment>
<comment type="disruption phenotype">
    <text evidence="2">Alteration of the morphology of feeding site and failure of nematode life cycle completion.</text>
</comment>
<comment type="similarity">
    <text evidence="3">Belongs to the tubulin family.</text>
</comment>
<protein>
    <recommendedName>
        <fullName>Tubulin gamma-1 chain</fullName>
    </recommendedName>
    <alternativeName>
        <fullName>Gamma-1-tubulin</fullName>
    </alternativeName>
</protein>
<dbReference type="EMBL" id="U02069">
    <property type="protein sequence ID" value="AAA20653.1"/>
    <property type="molecule type" value="Genomic_DNA"/>
</dbReference>
<dbReference type="EMBL" id="AL132959">
    <property type="protein sequence ID" value="CAB71095.1"/>
    <property type="molecule type" value="Genomic_DNA"/>
</dbReference>
<dbReference type="EMBL" id="CP002686">
    <property type="protein sequence ID" value="AEE80236.1"/>
    <property type="molecule type" value="Genomic_DNA"/>
</dbReference>
<dbReference type="PIR" id="T47957">
    <property type="entry name" value="T47957"/>
</dbReference>
<dbReference type="RefSeq" id="NP_191724.1">
    <property type="nucleotide sequence ID" value="NM_116030.2"/>
</dbReference>
<dbReference type="SMR" id="P38557"/>
<dbReference type="BioGRID" id="10652">
    <property type="interactions" value="8"/>
</dbReference>
<dbReference type="FunCoup" id="P38557">
    <property type="interactions" value="3750"/>
</dbReference>
<dbReference type="IntAct" id="P38557">
    <property type="interactions" value="1"/>
</dbReference>
<dbReference type="STRING" id="3702.P38557"/>
<dbReference type="PaxDb" id="3702-AT3G61650.1"/>
<dbReference type="ProteomicsDB" id="234223"/>
<dbReference type="EnsemblPlants" id="AT3G61650.1">
    <property type="protein sequence ID" value="AT3G61650.1"/>
    <property type="gene ID" value="AT3G61650"/>
</dbReference>
<dbReference type="GeneID" id="825338"/>
<dbReference type="Gramene" id="AT3G61650.1">
    <property type="protein sequence ID" value="AT3G61650.1"/>
    <property type="gene ID" value="AT3G61650"/>
</dbReference>
<dbReference type="KEGG" id="ath:AT3G61650"/>
<dbReference type="Araport" id="AT3G61650"/>
<dbReference type="TAIR" id="AT3G61650">
    <property type="gene designation" value="TUBG1"/>
</dbReference>
<dbReference type="eggNOG" id="KOG1374">
    <property type="taxonomic scope" value="Eukaryota"/>
</dbReference>
<dbReference type="HOGENOM" id="CLU_015718_1_0_1"/>
<dbReference type="InParanoid" id="P38557"/>
<dbReference type="OMA" id="HRYISIL"/>
<dbReference type="OrthoDB" id="1919198at2759"/>
<dbReference type="PhylomeDB" id="P38557"/>
<dbReference type="CD-CODE" id="33FCD62D">
    <property type="entry name" value="Centrosome"/>
</dbReference>
<dbReference type="PRO" id="PR:P38557"/>
<dbReference type="Proteomes" id="UP000006548">
    <property type="component" value="Chromosome 3"/>
</dbReference>
<dbReference type="ExpressionAtlas" id="P38557">
    <property type="expression patterns" value="baseline and differential"/>
</dbReference>
<dbReference type="GO" id="GO:0005938">
    <property type="term" value="C:cell cortex"/>
    <property type="evidence" value="ECO:0000314"/>
    <property type="project" value="UniProtKB"/>
</dbReference>
<dbReference type="GO" id="GO:0005737">
    <property type="term" value="C:cytoplasm"/>
    <property type="evidence" value="ECO:0000314"/>
    <property type="project" value="UniProtKB"/>
</dbReference>
<dbReference type="GO" id="GO:0000930">
    <property type="term" value="C:gamma-tubulin complex"/>
    <property type="evidence" value="ECO:0007669"/>
    <property type="project" value="InterPro"/>
</dbReference>
<dbReference type="GO" id="GO:0005874">
    <property type="term" value="C:microtubule"/>
    <property type="evidence" value="ECO:0000314"/>
    <property type="project" value="TAIR"/>
</dbReference>
<dbReference type="GO" id="GO:0005739">
    <property type="term" value="C:mitochondrion"/>
    <property type="evidence" value="ECO:0007005"/>
    <property type="project" value="TAIR"/>
</dbReference>
<dbReference type="GO" id="GO:0005634">
    <property type="term" value="C:nucleus"/>
    <property type="evidence" value="ECO:0000314"/>
    <property type="project" value="TAIR"/>
</dbReference>
<dbReference type="GO" id="GO:0005525">
    <property type="term" value="F:GTP binding"/>
    <property type="evidence" value="ECO:0007669"/>
    <property type="project" value="UniProtKB-KW"/>
</dbReference>
<dbReference type="GO" id="GO:0051641">
    <property type="term" value="P:cellular localization"/>
    <property type="evidence" value="ECO:0000315"/>
    <property type="project" value="TAIR"/>
</dbReference>
<dbReference type="GO" id="GO:0000911">
    <property type="term" value="P:cytokinesis by cell plate formation"/>
    <property type="evidence" value="ECO:0000315"/>
    <property type="project" value="TAIR"/>
</dbReference>
<dbReference type="GO" id="GO:0031122">
    <property type="term" value="P:cytoplasmic microtubule organization"/>
    <property type="evidence" value="ECO:0007669"/>
    <property type="project" value="InterPro"/>
</dbReference>
<dbReference type="GO" id="GO:0048366">
    <property type="term" value="P:leaf development"/>
    <property type="evidence" value="ECO:0000315"/>
    <property type="project" value="TAIR"/>
</dbReference>
<dbReference type="GO" id="GO:0007020">
    <property type="term" value="P:microtubule nucleation"/>
    <property type="evidence" value="ECO:0000315"/>
    <property type="project" value="TAIR"/>
</dbReference>
<dbReference type="GO" id="GO:0046785">
    <property type="term" value="P:microtubule polymerization"/>
    <property type="evidence" value="ECO:0000315"/>
    <property type="project" value="TAIR"/>
</dbReference>
<dbReference type="GO" id="GO:0009624">
    <property type="term" value="P:response to nematode"/>
    <property type="evidence" value="ECO:0000314"/>
    <property type="project" value="UniProtKB"/>
</dbReference>
<dbReference type="GO" id="GO:0048768">
    <property type="term" value="P:root hair cell tip growth"/>
    <property type="evidence" value="ECO:0000315"/>
    <property type="project" value="TAIR"/>
</dbReference>
<dbReference type="GO" id="GO:0010103">
    <property type="term" value="P:stomatal complex morphogenesis"/>
    <property type="evidence" value="ECO:0000315"/>
    <property type="project" value="TAIR"/>
</dbReference>
<dbReference type="CDD" id="cd02188">
    <property type="entry name" value="gamma_tubulin"/>
    <property type="match status" value="1"/>
</dbReference>
<dbReference type="FunFam" id="1.10.287.600:FF:000004">
    <property type="entry name" value="Tubulin gamma chain"/>
    <property type="match status" value="1"/>
</dbReference>
<dbReference type="FunFam" id="3.30.1330.20:FF:000003">
    <property type="entry name" value="Tubulin gamma chain"/>
    <property type="match status" value="1"/>
</dbReference>
<dbReference type="FunFam" id="3.40.50.1440:FF:000010">
    <property type="entry name" value="Tubulin gamma chain"/>
    <property type="match status" value="1"/>
</dbReference>
<dbReference type="Gene3D" id="1.10.287.600">
    <property type="entry name" value="Helix hairpin bin"/>
    <property type="match status" value="1"/>
</dbReference>
<dbReference type="Gene3D" id="3.30.1330.20">
    <property type="entry name" value="Tubulin/FtsZ, C-terminal domain"/>
    <property type="match status" value="1"/>
</dbReference>
<dbReference type="Gene3D" id="3.40.50.1440">
    <property type="entry name" value="Tubulin/FtsZ, GTPase domain"/>
    <property type="match status" value="1"/>
</dbReference>
<dbReference type="InterPro" id="IPR002454">
    <property type="entry name" value="Gamma_tubulin"/>
</dbReference>
<dbReference type="InterPro" id="IPR008280">
    <property type="entry name" value="Tub_FtsZ_C"/>
</dbReference>
<dbReference type="InterPro" id="IPR000217">
    <property type="entry name" value="Tubulin"/>
</dbReference>
<dbReference type="InterPro" id="IPR037103">
    <property type="entry name" value="Tubulin/FtsZ-like_C"/>
</dbReference>
<dbReference type="InterPro" id="IPR018316">
    <property type="entry name" value="Tubulin/FtsZ_2-layer-sand-dom"/>
</dbReference>
<dbReference type="InterPro" id="IPR036525">
    <property type="entry name" value="Tubulin/FtsZ_GTPase_sf"/>
</dbReference>
<dbReference type="InterPro" id="IPR023123">
    <property type="entry name" value="Tubulin_C"/>
</dbReference>
<dbReference type="InterPro" id="IPR017975">
    <property type="entry name" value="Tubulin_CS"/>
</dbReference>
<dbReference type="InterPro" id="IPR003008">
    <property type="entry name" value="Tubulin_FtsZ_GTPase"/>
</dbReference>
<dbReference type="PANTHER" id="PTHR11588">
    <property type="entry name" value="TUBULIN"/>
    <property type="match status" value="1"/>
</dbReference>
<dbReference type="Pfam" id="PF00091">
    <property type="entry name" value="Tubulin"/>
    <property type="match status" value="1"/>
</dbReference>
<dbReference type="Pfam" id="PF03953">
    <property type="entry name" value="Tubulin_C"/>
    <property type="match status" value="1"/>
</dbReference>
<dbReference type="PRINTS" id="PR01164">
    <property type="entry name" value="GAMMATUBULIN"/>
</dbReference>
<dbReference type="PRINTS" id="PR01161">
    <property type="entry name" value="TUBULIN"/>
</dbReference>
<dbReference type="SMART" id="SM00864">
    <property type="entry name" value="Tubulin"/>
    <property type="match status" value="1"/>
</dbReference>
<dbReference type="SMART" id="SM00865">
    <property type="entry name" value="Tubulin_C"/>
    <property type="match status" value="1"/>
</dbReference>
<dbReference type="SUPFAM" id="SSF55307">
    <property type="entry name" value="Tubulin C-terminal domain-like"/>
    <property type="match status" value="1"/>
</dbReference>
<dbReference type="SUPFAM" id="SSF52490">
    <property type="entry name" value="Tubulin nucleotide-binding domain-like"/>
    <property type="match status" value="1"/>
</dbReference>
<dbReference type="PROSITE" id="PS00227">
    <property type="entry name" value="TUBULIN"/>
    <property type="match status" value="1"/>
</dbReference>